<organism>
    <name type="scientific">Staphylococcus epidermidis (strain ATCC 12228 / FDA PCI 1200)</name>
    <dbReference type="NCBI Taxonomy" id="176280"/>
    <lineage>
        <taxon>Bacteria</taxon>
        <taxon>Bacillati</taxon>
        <taxon>Bacillota</taxon>
        <taxon>Bacilli</taxon>
        <taxon>Bacillales</taxon>
        <taxon>Staphylococcaceae</taxon>
        <taxon>Staphylococcus</taxon>
    </lineage>
</organism>
<sequence>MIKVKFAVIGNPISHSLSPLMHHANFQSLNLENTYEAINVPVNQFQDIKKIISEKSIDGFNVTIPHKERIIPYLDDINEQAKSVGAVNTVLVKDGKWIGYNTDGIGYVNGLKQIYEGIEDAYILILGAGGASKGIANELYKIVRPTLTVANRTMSRFNNWSLNINKINLSHAESHLDEFDIIINTTPAGMNGNTDSVISLNRLASHTLVSDIVYNPYKTPILIEAEQRGNPIYNGLDMFVHQGAESFKIWTNLEPDIKAMKNIVIQKLKGEL</sequence>
<name>AROE_STAES</name>
<gene>
    <name evidence="1" type="primary">aroE</name>
    <name type="ordered locus">SE_1282</name>
</gene>
<feature type="chain" id="PRO_0000136036" description="Shikimate dehydrogenase (NADP(+))">
    <location>
        <begin position="1"/>
        <end position="272"/>
    </location>
</feature>
<feature type="active site" description="Proton acceptor" evidence="1">
    <location>
        <position position="67"/>
    </location>
</feature>
<feature type="binding site" evidence="1">
    <location>
        <begin position="16"/>
        <end position="18"/>
    </location>
    <ligand>
        <name>shikimate</name>
        <dbReference type="ChEBI" id="CHEBI:36208"/>
    </ligand>
</feature>
<feature type="binding site" evidence="1">
    <location>
        <position position="63"/>
    </location>
    <ligand>
        <name>shikimate</name>
        <dbReference type="ChEBI" id="CHEBI:36208"/>
    </ligand>
</feature>
<feature type="binding site" evidence="1">
    <location>
        <position position="79"/>
    </location>
    <ligand>
        <name>NADP(+)</name>
        <dbReference type="ChEBI" id="CHEBI:58349"/>
    </ligand>
</feature>
<feature type="binding site" evidence="1">
    <location>
        <position position="88"/>
    </location>
    <ligand>
        <name>shikimate</name>
        <dbReference type="ChEBI" id="CHEBI:36208"/>
    </ligand>
</feature>
<feature type="binding site" evidence="1">
    <location>
        <position position="103"/>
    </location>
    <ligand>
        <name>shikimate</name>
        <dbReference type="ChEBI" id="CHEBI:36208"/>
    </ligand>
</feature>
<feature type="binding site" evidence="1">
    <location>
        <begin position="127"/>
        <end position="131"/>
    </location>
    <ligand>
        <name>NADP(+)</name>
        <dbReference type="ChEBI" id="CHEBI:58349"/>
    </ligand>
</feature>
<feature type="binding site" evidence="1">
    <location>
        <begin position="151"/>
        <end position="156"/>
    </location>
    <ligand>
        <name>NADP(+)</name>
        <dbReference type="ChEBI" id="CHEBI:58349"/>
    </ligand>
</feature>
<feature type="binding site" evidence="1">
    <location>
        <position position="212"/>
    </location>
    <ligand>
        <name>NADP(+)</name>
        <dbReference type="ChEBI" id="CHEBI:58349"/>
    </ligand>
</feature>
<feature type="binding site" evidence="1">
    <location>
        <position position="214"/>
    </location>
    <ligand>
        <name>shikimate</name>
        <dbReference type="ChEBI" id="CHEBI:36208"/>
    </ligand>
</feature>
<feature type="binding site" evidence="1">
    <location>
        <position position="235"/>
    </location>
    <ligand>
        <name>NADP(+)</name>
        <dbReference type="ChEBI" id="CHEBI:58349"/>
    </ligand>
</feature>
<comment type="function">
    <text evidence="1">Involved in the biosynthesis of the chorismate, which leads to the biosynthesis of aromatic amino acids. Catalyzes the reversible NADPH linked reduction of 3-dehydroshikimate (DHSA) to yield shikimate (SA).</text>
</comment>
<comment type="catalytic activity">
    <reaction evidence="1">
        <text>shikimate + NADP(+) = 3-dehydroshikimate + NADPH + H(+)</text>
        <dbReference type="Rhea" id="RHEA:17737"/>
        <dbReference type="ChEBI" id="CHEBI:15378"/>
        <dbReference type="ChEBI" id="CHEBI:16630"/>
        <dbReference type="ChEBI" id="CHEBI:36208"/>
        <dbReference type="ChEBI" id="CHEBI:57783"/>
        <dbReference type="ChEBI" id="CHEBI:58349"/>
        <dbReference type="EC" id="1.1.1.25"/>
    </reaction>
</comment>
<comment type="pathway">
    <text evidence="1">Metabolic intermediate biosynthesis; chorismate biosynthesis; chorismate from D-erythrose 4-phosphate and phosphoenolpyruvate: step 4/7.</text>
</comment>
<comment type="subunit">
    <text evidence="1">Homodimer.</text>
</comment>
<comment type="similarity">
    <text evidence="1">Belongs to the shikimate dehydrogenase family.</text>
</comment>
<protein>
    <recommendedName>
        <fullName evidence="1">Shikimate dehydrogenase (NADP(+))</fullName>
        <shortName evidence="1">SDH</shortName>
        <ecNumber evidence="1">1.1.1.25</ecNumber>
    </recommendedName>
</protein>
<keyword id="KW-0028">Amino-acid biosynthesis</keyword>
<keyword id="KW-0057">Aromatic amino acid biosynthesis</keyword>
<keyword id="KW-0521">NADP</keyword>
<keyword id="KW-0560">Oxidoreductase</keyword>
<accession>Q8CP09</accession>
<reference key="1">
    <citation type="journal article" date="2003" name="Mol. Microbiol.">
        <title>Genome-based analysis of virulence genes in a non-biofilm-forming Staphylococcus epidermidis strain (ATCC 12228).</title>
        <authorList>
            <person name="Zhang Y.-Q."/>
            <person name="Ren S.-X."/>
            <person name="Li H.-L."/>
            <person name="Wang Y.-X."/>
            <person name="Fu G."/>
            <person name="Yang J."/>
            <person name="Qin Z.-Q."/>
            <person name="Miao Y.-G."/>
            <person name="Wang W.-Y."/>
            <person name="Chen R.-S."/>
            <person name="Shen Y."/>
            <person name="Chen Z."/>
            <person name="Yuan Z.-H."/>
            <person name="Zhao G.-P."/>
            <person name="Qu D."/>
            <person name="Danchin A."/>
            <person name="Wen Y.-M."/>
        </authorList>
    </citation>
    <scope>NUCLEOTIDE SEQUENCE [LARGE SCALE GENOMIC DNA]</scope>
    <source>
        <strain>ATCC 12228 / FDA PCI 1200</strain>
    </source>
</reference>
<evidence type="ECO:0000255" key="1">
    <source>
        <dbReference type="HAMAP-Rule" id="MF_00222"/>
    </source>
</evidence>
<dbReference type="EC" id="1.1.1.25" evidence="1"/>
<dbReference type="EMBL" id="AE015929">
    <property type="protein sequence ID" value="AAO04881.1"/>
    <property type="molecule type" value="Genomic_DNA"/>
</dbReference>
<dbReference type="RefSeq" id="NP_764837.1">
    <property type="nucleotide sequence ID" value="NC_004461.1"/>
</dbReference>
<dbReference type="SMR" id="Q8CP09"/>
<dbReference type="KEGG" id="sep:SE_1282"/>
<dbReference type="PATRIC" id="fig|176280.10.peg.1251"/>
<dbReference type="eggNOG" id="COG0169">
    <property type="taxonomic scope" value="Bacteria"/>
</dbReference>
<dbReference type="HOGENOM" id="CLU_044063_4_1_9"/>
<dbReference type="OrthoDB" id="9792692at2"/>
<dbReference type="UniPathway" id="UPA00053">
    <property type="reaction ID" value="UER00087"/>
</dbReference>
<dbReference type="Proteomes" id="UP000001411">
    <property type="component" value="Chromosome"/>
</dbReference>
<dbReference type="GO" id="GO:0005829">
    <property type="term" value="C:cytosol"/>
    <property type="evidence" value="ECO:0007669"/>
    <property type="project" value="TreeGrafter"/>
</dbReference>
<dbReference type="GO" id="GO:0050661">
    <property type="term" value="F:NADP binding"/>
    <property type="evidence" value="ECO:0007669"/>
    <property type="project" value="InterPro"/>
</dbReference>
<dbReference type="GO" id="GO:0004764">
    <property type="term" value="F:shikimate 3-dehydrogenase (NADP+) activity"/>
    <property type="evidence" value="ECO:0007669"/>
    <property type="project" value="UniProtKB-UniRule"/>
</dbReference>
<dbReference type="GO" id="GO:0008652">
    <property type="term" value="P:amino acid biosynthetic process"/>
    <property type="evidence" value="ECO:0007669"/>
    <property type="project" value="UniProtKB-KW"/>
</dbReference>
<dbReference type="GO" id="GO:0009073">
    <property type="term" value="P:aromatic amino acid family biosynthetic process"/>
    <property type="evidence" value="ECO:0007669"/>
    <property type="project" value="UniProtKB-KW"/>
</dbReference>
<dbReference type="GO" id="GO:0009423">
    <property type="term" value="P:chorismate biosynthetic process"/>
    <property type="evidence" value="ECO:0007669"/>
    <property type="project" value="UniProtKB-UniRule"/>
</dbReference>
<dbReference type="GO" id="GO:0019632">
    <property type="term" value="P:shikimate metabolic process"/>
    <property type="evidence" value="ECO:0007669"/>
    <property type="project" value="InterPro"/>
</dbReference>
<dbReference type="CDD" id="cd01065">
    <property type="entry name" value="NAD_bind_Shikimate_DH"/>
    <property type="match status" value="1"/>
</dbReference>
<dbReference type="FunFam" id="3.40.50.10860:FF:000016">
    <property type="entry name" value="Shikimate dehydrogenase (NADP(+))"/>
    <property type="match status" value="1"/>
</dbReference>
<dbReference type="Gene3D" id="3.40.50.10860">
    <property type="entry name" value="Leucine Dehydrogenase, chain A, domain 1"/>
    <property type="match status" value="1"/>
</dbReference>
<dbReference type="Gene3D" id="3.40.50.720">
    <property type="entry name" value="NAD(P)-binding Rossmann-like Domain"/>
    <property type="match status" value="1"/>
</dbReference>
<dbReference type="HAMAP" id="MF_00222">
    <property type="entry name" value="Shikimate_DH_AroE"/>
    <property type="match status" value="1"/>
</dbReference>
<dbReference type="InterPro" id="IPR046346">
    <property type="entry name" value="Aminoacid_DH-like_N_sf"/>
</dbReference>
<dbReference type="InterPro" id="IPR036291">
    <property type="entry name" value="NAD(P)-bd_dom_sf"/>
</dbReference>
<dbReference type="InterPro" id="IPR041121">
    <property type="entry name" value="SDH_C"/>
</dbReference>
<dbReference type="InterPro" id="IPR011342">
    <property type="entry name" value="Shikimate_DH"/>
</dbReference>
<dbReference type="InterPro" id="IPR013708">
    <property type="entry name" value="Shikimate_DH-bd_N"/>
</dbReference>
<dbReference type="InterPro" id="IPR022893">
    <property type="entry name" value="Shikimate_DH_fam"/>
</dbReference>
<dbReference type="InterPro" id="IPR006151">
    <property type="entry name" value="Shikm_DH/Glu-tRNA_Rdtase"/>
</dbReference>
<dbReference type="NCBIfam" id="TIGR00507">
    <property type="entry name" value="aroE"/>
    <property type="match status" value="1"/>
</dbReference>
<dbReference type="PANTHER" id="PTHR21089:SF1">
    <property type="entry name" value="BIFUNCTIONAL 3-DEHYDROQUINATE DEHYDRATASE_SHIKIMATE DEHYDROGENASE, CHLOROPLASTIC"/>
    <property type="match status" value="1"/>
</dbReference>
<dbReference type="PANTHER" id="PTHR21089">
    <property type="entry name" value="SHIKIMATE DEHYDROGENASE"/>
    <property type="match status" value="1"/>
</dbReference>
<dbReference type="Pfam" id="PF18317">
    <property type="entry name" value="SDH_C"/>
    <property type="match status" value="1"/>
</dbReference>
<dbReference type="Pfam" id="PF01488">
    <property type="entry name" value="Shikimate_DH"/>
    <property type="match status" value="1"/>
</dbReference>
<dbReference type="Pfam" id="PF08501">
    <property type="entry name" value="Shikimate_dh_N"/>
    <property type="match status" value="1"/>
</dbReference>
<dbReference type="SUPFAM" id="SSF53223">
    <property type="entry name" value="Aminoacid dehydrogenase-like, N-terminal domain"/>
    <property type="match status" value="1"/>
</dbReference>
<dbReference type="SUPFAM" id="SSF51735">
    <property type="entry name" value="NAD(P)-binding Rossmann-fold domains"/>
    <property type="match status" value="1"/>
</dbReference>
<proteinExistence type="inferred from homology"/>